<gene>
    <name evidence="1" type="primary">ATG4D</name>
    <name evidence="5" type="synonym">APG4D</name>
</gene>
<keyword id="KW-0053">Apoptosis</keyword>
<keyword id="KW-0072">Autophagy</keyword>
<keyword id="KW-0963">Cytoplasm</keyword>
<keyword id="KW-0378">Hydrolase</keyword>
<keyword id="KW-0496">Mitochondrion</keyword>
<keyword id="KW-0597">Phosphoprotein</keyword>
<keyword id="KW-0645">Protease</keyword>
<keyword id="KW-0653">Protein transport</keyword>
<keyword id="KW-1185">Reference proteome</keyword>
<keyword id="KW-0788">Thiol protease</keyword>
<keyword id="KW-0813">Transport</keyword>
<keyword id="KW-0833">Ubl conjugation pathway</keyword>
<comment type="function">
    <molecule>Cysteine protease ATG4D</molecule>
    <text evidence="1 2 3">Cysteine protease that plays a key role in autophagy by mediating both proteolytic activation and delipidation of ATG8 family proteins. The protease activity is required for proteolytic activation of ATG8 family proteins: cleaves the C-terminal amino acid of ATG8 proteins MAP1LC3 and GABARAPL2, to reveal a C-terminal glycine (By similarity). Exposure of the glycine at the C-terminus is essential for ATG8 proteins conjugation to phosphatidylethanolamine (PE) and insertion to membranes, which is necessary for autophagy (By similarity). In addition to the protease activity, also mediates delipidation of ATG8 family proteins. Catalyzes delipidation of PE-conjugated forms of ATG8 proteins during macroautophagy. Also involved in non-canonical autophagy, a parallel pathway involving conjugation of ATG8 proteins to single membranes at endolysosomal compartments, by catalyzing delipidation of ATG8 proteins conjugated to phosphatidylserine (PS) (By similarity). ATG4D plays a role in the autophagy-mediated neuronal homeostasis in the central nervous system. Compared to other members of the family (ATG4A, ATG4B or ATG4C), constitutes the major protein for the delipidation activity, while it promotes weak proteolytic activation of ATG8 proteins (By similarity). Involved in phagophore growth during mitophagy independently of its protease activity and of ATG8 proteins: acts by regulating ATG9A trafficking to mitochondria and promoting phagophore-endoplasmic reticulum contacts during the lipid transfer phase of mitophagy (By similarity).</text>
</comment>
<comment type="function">
    <molecule>Cysteine protease ATG4D, mitochondrial</molecule>
    <text evidence="1">Plays a role as an autophagy regulator that links mitochondrial dysfunction with apoptosis. The mitochondrial import of ATG4D during cellular stress and differentiation may play important roles in the regulation of mitochondrial physiology, ROS, mitophagy and cell viability.</text>
</comment>
<comment type="catalytic activity">
    <reaction evidence="1">
        <text>[protein]-C-terminal L-amino acid-glycyl-phosphatidylethanolamide + H2O = [protein]-C-terminal L-amino acid-glycine + a 1,2-diacyl-sn-glycero-3-phosphoethanolamine</text>
        <dbReference type="Rhea" id="RHEA:67548"/>
        <dbReference type="Rhea" id="RHEA-COMP:17323"/>
        <dbReference type="Rhea" id="RHEA-COMP:17324"/>
        <dbReference type="ChEBI" id="CHEBI:15377"/>
        <dbReference type="ChEBI" id="CHEBI:64612"/>
        <dbReference type="ChEBI" id="CHEBI:172940"/>
        <dbReference type="ChEBI" id="CHEBI:172941"/>
    </reaction>
    <physiologicalReaction direction="left-to-right" evidence="1">
        <dbReference type="Rhea" id="RHEA:67549"/>
    </physiologicalReaction>
</comment>
<comment type="catalytic activity">
    <reaction evidence="1">
        <text>[protein]-C-terminal L-amino acid-glycyl-phosphatidylserine + H2O = [protein]-C-terminal L-amino acid-glycine + a 1,2-diacyl-sn-glycero-3-phospho-L-serine</text>
        <dbReference type="Rhea" id="RHEA:67576"/>
        <dbReference type="Rhea" id="RHEA-COMP:17324"/>
        <dbReference type="Rhea" id="RHEA-COMP:17326"/>
        <dbReference type="ChEBI" id="CHEBI:15377"/>
        <dbReference type="ChEBI" id="CHEBI:57262"/>
        <dbReference type="ChEBI" id="CHEBI:172940"/>
        <dbReference type="ChEBI" id="CHEBI:172942"/>
    </reaction>
    <physiologicalReaction direction="left-to-right" evidence="1">
        <dbReference type="Rhea" id="RHEA:67577"/>
    </physiologicalReaction>
</comment>
<comment type="activity regulation">
    <text evidence="1">Inhibited by N-ethylmaleimide.</text>
</comment>
<comment type="subcellular location">
    <molecule>Cysteine protease ATG4D</molecule>
    <subcellularLocation>
        <location evidence="1">Cytoplasm</location>
    </subcellularLocation>
</comment>
<comment type="subcellular location">
    <molecule>Cysteine protease ATG4D, mitochondrial</molecule>
    <subcellularLocation>
        <location evidence="1">Cytoplasm</location>
    </subcellularLocation>
    <subcellularLocation>
        <location evidence="1">Mitochondrion matrix</location>
    </subcellularLocation>
    <text evidence="1">Imported into mitochondrial matrix after cleavage by CASP3 during oxidative stress and cell death.</text>
</comment>
<comment type="domain">
    <text evidence="1">The cryptic mitochondrial transit peptide is revealed after cleavage by caspase upon oxidative stress and cell death. It acts then as a functional transit peptide, and allows the import of the cleaved protein into the mitochondria.</text>
</comment>
<comment type="PTM">
    <text evidence="1">Cleaved by CASP3 during apoptosis which leads to increased activity. The cleavage by CASP3 reveals a cryptic mitochondrial targeting sequence immediately downstream of their canonical caspase cleavage sites which leads to mitochondrial import of the protein.</text>
</comment>
<comment type="similarity">
    <text evidence="6">Belongs to the peptidase C54 family.</text>
</comment>
<reference key="1">
    <citation type="submission" date="2004-03" db="EMBL/GenBank/DDBJ databases">
        <authorList>
            <person name="Leeb T."/>
        </authorList>
    </citation>
    <scope>NUCLEOTIDE SEQUENCE [GENOMIC DNA]</scope>
</reference>
<accession>Q684M2</accession>
<organism>
    <name type="scientific">Sus scrofa</name>
    <name type="common">Pig</name>
    <dbReference type="NCBI Taxonomy" id="9823"/>
    <lineage>
        <taxon>Eukaryota</taxon>
        <taxon>Metazoa</taxon>
        <taxon>Chordata</taxon>
        <taxon>Craniata</taxon>
        <taxon>Vertebrata</taxon>
        <taxon>Euteleostomi</taxon>
        <taxon>Mammalia</taxon>
        <taxon>Eutheria</taxon>
        <taxon>Laurasiatheria</taxon>
        <taxon>Artiodactyla</taxon>
        <taxon>Suina</taxon>
        <taxon>Suidae</taxon>
        <taxon>Sus</taxon>
    </lineage>
</organism>
<feature type="chain" id="PRO_0000215855" description="Cysteine protease ATG4D">
    <location>
        <begin position="1"/>
        <end position="469"/>
    </location>
</feature>
<feature type="chain" id="PRO_0000423410" description="Cysteine protease ATG4D, mitochondrial" evidence="1">
    <location>
        <begin position="63"/>
        <end position="469"/>
    </location>
</feature>
<feature type="region of interest" description="Disordered" evidence="4">
    <location>
        <begin position="1"/>
        <end position="59"/>
    </location>
</feature>
<feature type="region of interest" description="Cryptic mitochondrial signal peptide" evidence="1">
    <location>
        <begin position="63"/>
        <end position="102"/>
    </location>
</feature>
<feature type="compositionally biased region" description="Polar residues" evidence="4">
    <location>
        <begin position="1"/>
        <end position="15"/>
    </location>
</feature>
<feature type="compositionally biased region" description="Basic and acidic residues" evidence="4">
    <location>
        <begin position="17"/>
        <end position="26"/>
    </location>
</feature>
<feature type="active site" description="Nucleophile" evidence="3">
    <location>
        <position position="143"/>
    </location>
</feature>
<feature type="active site" evidence="3">
    <location>
        <position position="351"/>
    </location>
</feature>
<feature type="active site" evidence="3">
    <location>
        <position position="353"/>
    </location>
</feature>
<feature type="site" description="Cleavage; by CASP3" evidence="1">
    <location>
        <begin position="62"/>
        <end position="63"/>
    </location>
</feature>
<feature type="modified residue" description="Phosphoserine" evidence="1">
    <location>
        <position position="462"/>
    </location>
</feature>
<evidence type="ECO:0000250" key="1">
    <source>
        <dbReference type="UniProtKB" id="Q86TL0"/>
    </source>
</evidence>
<evidence type="ECO:0000250" key="2">
    <source>
        <dbReference type="UniProtKB" id="Q8BGV9"/>
    </source>
</evidence>
<evidence type="ECO:0000250" key="3">
    <source>
        <dbReference type="UniProtKB" id="Q9Y4P1"/>
    </source>
</evidence>
<evidence type="ECO:0000256" key="4">
    <source>
        <dbReference type="SAM" id="MobiDB-lite"/>
    </source>
</evidence>
<evidence type="ECO:0000303" key="5">
    <source ref="1"/>
</evidence>
<evidence type="ECO:0000305" key="6"/>
<sequence>MNSVSPAAAQYQSGSPEDARRPEGRRPRGPRTPDPNSLGPSGASGPALASPGVGPGEPDEVDKFKAKFLTAWNNVKYGWAVKSRTSFSKISSVHLCGRRYRFEGEGDIQRFQRDFVSRLWLTYRRDFPPLAGGCLTSDCGWGCMLRSGQMMLAQGLLLHFLPRDWTWSQGVGLGPPESSPNRYRGPAHWMPPHWVQAAPELEQERRHRQIVSWFADHPRAPFGLHRLVELGQSSGKKAGDWYGPSLVAHILRKAVESCSEVTRLVVYVSQDCTVYKADVARLVARPDPTAEWKAVVILVPVRLGGETLNPVYVPCVKELLRSELCLGIMGGKPRHSLYFIGYQDDFLLYLDPHYCQPTVDVSQADFPLESFHCTSPRKMAFTKMDPSCTVGFYAGDRKEFETLCSELTRVLSSSSATERYPMFTLVEGHAQDHSLDDLCSQPSQPTLRLPRTGRLLKAKRPSSEDFVFL</sequence>
<protein>
    <recommendedName>
        <fullName evidence="6">Cysteine protease ATG4D</fullName>
        <ecNumber evidence="1">3.4.22.-</ecNumber>
    </recommendedName>
    <alternativeName>
        <fullName evidence="5">Autophagy-related protein 4 homolog D</fullName>
        <shortName evidence="1">Autophagin-4</shortName>
    </alternativeName>
    <component>
        <recommendedName>
            <fullName evidence="1">Cysteine protease ATG4D, mitochondrial</fullName>
        </recommendedName>
    </component>
</protein>
<name>ATG4D_PIG</name>
<proteinExistence type="inferred from homology"/>
<dbReference type="EC" id="3.4.22.-" evidence="1"/>
<dbReference type="EMBL" id="AJ632303">
    <property type="protein sequence ID" value="CAG15153.1"/>
    <property type="molecule type" value="Genomic_DNA"/>
</dbReference>
<dbReference type="RefSeq" id="NP_001116551.1">
    <property type="nucleotide sequence ID" value="NM_001123079.1"/>
</dbReference>
<dbReference type="SMR" id="Q684M2"/>
<dbReference type="FunCoup" id="Q684M2">
    <property type="interactions" value="385"/>
</dbReference>
<dbReference type="STRING" id="9823.ENSSSCP00000036288"/>
<dbReference type="MEROPS" id="C54.005"/>
<dbReference type="PaxDb" id="9823-ENSSSCP00000014504"/>
<dbReference type="Ensembl" id="ENSSSCT00030037698.1">
    <property type="protein sequence ID" value="ENSSSCP00030017286.1"/>
    <property type="gene ID" value="ENSSSCG00030026949.1"/>
</dbReference>
<dbReference type="GeneID" id="100141400"/>
<dbReference type="KEGG" id="ssc:100141400"/>
<dbReference type="CTD" id="84971"/>
<dbReference type="eggNOG" id="KOG2674">
    <property type="taxonomic scope" value="Eukaryota"/>
</dbReference>
<dbReference type="InParanoid" id="Q684M2"/>
<dbReference type="OrthoDB" id="2960936at2759"/>
<dbReference type="Reactome" id="R-SSC-1632852">
    <property type="pathway name" value="Macroautophagy"/>
</dbReference>
<dbReference type="Proteomes" id="UP000008227">
    <property type="component" value="Unplaced"/>
</dbReference>
<dbReference type="Proteomes" id="UP000314985">
    <property type="component" value="Unplaced"/>
</dbReference>
<dbReference type="Proteomes" id="UP000694570">
    <property type="component" value="Unplaced"/>
</dbReference>
<dbReference type="Proteomes" id="UP000694571">
    <property type="component" value="Unplaced"/>
</dbReference>
<dbReference type="Proteomes" id="UP000694720">
    <property type="component" value="Unplaced"/>
</dbReference>
<dbReference type="Proteomes" id="UP000694722">
    <property type="component" value="Unplaced"/>
</dbReference>
<dbReference type="Proteomes" id="UP000694723">
    <property type="component" value="Unplaced"/>
</dbReference>
<dbReference type="Proteomes" id="UP000694724">
    <property type="component" value="Unplaced"/>
</dbReference>
<dbReference type="Proteomes" id="UP000694725">
    <property type="component" value="Unplaced"/>
</dbReference>
<dbReference type="Proteomes" id="UP000694726">
    <property type="component" value="Unplaced"/>
</dbReference>
<dbReference type="Proteomes" id="UP000694727">
    <property type="component" value="Unplaced"/>
</dbReference>
<dbReference type="Proteomes" id="UP000694728">
    <property type="component" value="Unplaced"/>
</dbReference>
<dbReference type="GO" id="GO:0005737">
    <property type="term" value="C:cytoplasm"/>
    <property type="evidence" value="ECO:0000318"/>
    <property type="project" value="GO_Central"/>
</dbReference>
<dbReference type="GO" id="GO:0005759">
    <property type="term" value="C:mitochondrial matrix"/>
    <property type="evidence" value="ECO:0007669"/>
    <property type="project" value="UniProtKB-SubCell"/>
</dbReference>
<dbReference type="GO" id="GO:0004197">
    <property type="term" value="F:cysteine-type endopeptidase activity"/>
    <property type="evidence" value="ECO:0000318"/>
    <property type="project" value="GO_Central"/>
</dbReference>
<dbReference type="GO" id="GO:0008234">
    <property type="term" value="F:cysteine-type peptidase activity"/>
    <property type="evidence" value="ECO:0000250"/>
    <property type="project" value="UniProtKB"/>
</dbReference>
<dbReference type="GO" id="GO:0019786">
    <property type="term" value="F:protein-phosphatidylethanolamide deconjugating activity"/>
    <property type="evidence" value="ECO:0000318"/>
    <property type="project" value="GO_Central"/>
</dbReference>
<dbReference type="GO" id="GO:0035973">
    <property type="term" value="P:aggrephagy"/>
    <property type="evidence" value="ECO:0000318"/>
    <property type="project" value="GO_Central"/>
</dbReference>
<dbReference type="GO" id="GO:0006915">
    <property type="term" value="P:apoptotic process"/>
    <property type="evidence" value="ECO:0007669"/>
    <property type="project" value="UniProtKB-KW"/>
</dbReference>
<dbReference type="GO" id="GO:0000045">
    <property type="term" value="P:autophagosome assembly"/>
    <property type="evidence" value="ECO:0000318"/>
    <property type="project" value="GO_Central"/>
</dbReference>
<dbReference type="GO" id="GO:0006914">
    <property type="term" value="P:autophagy"/>
    <property type="evidence" value="ECO:0000250"/>
    <property type="project" value="UniProtKB"/>
</dbReference>
<dbReference type="GO" id="GO:0000423">
    <property type="term" value="P:mitophagy"/>
    <property type="evidence" value="ECO:0000250"/>
    <property type="project" value="UniProtKB"/>
</dbReference>
<dbReference type="GO" id="GO:0034727">
    <property type="term" value="P:piecemeal microautophagy of the nucleus"/>
    <property type="evidence" value="ECO:0000318"/>
    <property type="project" value="GO_Central"/>
</dbReference>
<dbReference type="GO" id="GO:0051697">
    <property type="term" value="P:protein delipidation"/>
    <property type="evidence" value="ECO:0000250"/>
    <property type="project" value="UniProtKB"/>
</dbReference>
<dbReference type="GO" id="GO:0034497">
    <property type="term" value="P:protein localization to phagophore assembly site"/>
    <property type="evidence" value="ECO:0000250"/>
    <property type="project" value="UniProtKB"/>
</dbReference>
<dbReference type="GO" id="GO:0016485">
    <property type="term" value="P:protein processing"/>
    <property type="evidence" value="ECO:0000318"/>
    <property type="project" value="GO_Central"/>
</dbReference>
<dbReference type="GO" id="GO:0015031">
    <property type="term" value="P:protein transport"/>
    <property type="evidence" value="ECO:0007669"/>
    <property type="project" value="UniProtKB-KW"/>
</dbReference>
<dbReference type="InterPro" id="IPR038765">
    <property type="entry name" value="Papain-like_cys_pep_sf"/>
</dbReference>
<dbReference type="InterPro" id="IPR005078">
    <property type="entry name" value="Peptidase_C54"/>
</dbReference>
<dbReference type="InterPro" id="IPR046792">
    <property type="entry name" value="Peptidase_C54_cat"/>
</dbReference>
<dbReference type="PANTHER" id="PTHR22624">
    <property type="entry name" value="CYSTEINE PROTEASE ATG4"/>
    <property type="match status" value="1"/>
</dbReference>
<dbReference type="PANTHER" id="PTHR22624:SF36">
    <property type="entry name" value="CYSTEINE PROTEASE ATG4D"/>
    <property type="match status" value="1"/>
</dbReference>
<dbReference type="Pfam" id="PF03416">
    <property type="entry name" value="Peptidase_C54"/>
    <property type="match status" value="1"/>
</dbReference>
<dbReference type="SUPFAM" id="SSF54001">
    <property type="entry name" value="Cysteine proteinases"/>
    <property type="match status" value="1"/>
</dbReference>